<feature type="transit peptide" description="Chloroplast" evidence="2">
    <location>
        <begin position="1"/>
        <end position="47"/>
    </location>
</feature>
<feature type="chain" id="PRO_0000418605" description="Probable sodium/metabolite cotransporter BASS4, chloroplastic">
    <location>
        <begin position="48"/>
        <end position="436"/>
    </location>
</feature>
<feature type="transmembrane region" description="Helical" evidence="2">
    <location>
        <begin position="109"/>
        <end position="129"/>
    </location>
</feature>
<feature type="transmembrane region" description="Helical" evidence="2">
    <location>
        <begin position="131"/>
        <end position="151"/>
    </location>
</feature>
<feature type="transmembrane region" description="Helical" evidence="2">
    <location>
        <begin position="157"/>
        <end position="177"/>
    </location>
</feature>
<feature type="transmembrane region" description="Helical" evidence="2">
    <location>
        <begin position="195"/>
        <end position="215"/>
    </location>
</feature>
<feature type="transmembrane region" description="Helical" evidence="2">
    <location>
        <begin position="225"/>
        <end position="245"/>
    </location>
</feature>
<feature type="transmembrane region" description="Helical" evidence="2">
    <location>
        <begin position="257"/>
        <end position="277"/>
    </location>
</feature>
<feature type="transmembrane region" description="Helical" evidence="2">
    <location>
        <begin position="297"/>
        <end position="314"/>
    </location>
</feature>
<feature type="transmembrane region" description="Helical" evidence="2">
    <location>
        <begin position="328"/>
        <end position="348"/>
    </location>
</feature>
<feature type="transmembrane region" description="Helical" evidence="2">
    <location>
        <begin position="403"/>
        <end position="423"/>
    </location>
</feature>
<evidence type="ECO:0000250" key="1"/>
<evidence type="ECO:0000255" key="2"/>
<evidence type="ECO:0000305" key="3"/>
<comment type="function">
    <text evidence="1">May function as sodium-coupled metabolite transporter across the chloroplast envelope.</text>
</comment>
<comment type="subcellular location">
    <subcellularLocation>
        <location evidence="3">Membrane</location>
        <topology evidence="3">Multi-pass membrane protein</topology>
    </subcellularLocation>
    <subcellularLocation>
        <location evidence="3">Plastid</location>
        <location evidence="3">Chloroplast envelope</location>
    </subcellularLocation>
</comment>
<comment type="similarity">
    <text evidence="3">Belongs to the bile acid:sodium symporter (BASS) (TC 2.A.28) family.</text>
</comment>
<comment type="sequence caution" evidence="3">
    <conflict type="erroneous gene model prediction">
        <sequence resource="EMBL-CDS" id="CAB87415"/>
    </conflict>
</comment>
<reference key="1">
    <citation type="journal article" date="2000" name="Nature">
        <title>Sequence and analysis of chromosome 3 of the plant Arabidopsis thaliana.</title>
        <authorList>
            <person name="Salanoubat M."/>
            <person name="Lemcke K."/>
            <person name="Rieger M."/>
            <person name="Ansorge W."/>
            <person name="Unseld M."/>
            <person name="Fartmann B."/>
            <person name="Valle G."/>
            <person name="Bloecker H."/>
            <person name="Perez-Alonso M."/>
            <person name="Obermaier B."/>
            <person name="Delseny M."/>
            <person name="Boutry M."/>
            <person name="Grivell L.A."/>
            <person name="Mache R."/>
            <person name="Puigdomenech P."/>
            <person name="De Simone V."/>
            <person name="Choisne N."/>
            <person name="Artiguenave F."/>
            <person name="Robert C."/>
            <person name="Brottier P."/>
            <person name="Wincker P."/>
            <person name="Cattolico L."/>
            <person name="Weissenbach J."/>
            <person name="Saurin W."/>
            <person name="Quetier F."/>
            <person name="Schaefer M."/>
            <person name="Mueller-Auer S."/>
            <person name="Gabel C."/>
            <person name="Fuchs M."/>
            <person name="Benes V."/>
            <person name="Wurmbach E."/>
            <person name="Drzonek H."/>
            <person name="Erfle H."/>
            <person name="Jordan N."/>
            <person name="Bangert S."/>
            <person name="Wiedelmann R."/>
            <person name="Kranz H."/>
            <person name="Voss H."/>
            <person name="Holland R."/>
            <person name="Brandt P."/>
            <person name="Nyakatura G."/>
            <person name="Vezzi A."/>
            <person name="D'Angelo M."/>
            <person name="Pallavicini A."/>
            <person name="Toppo S."/>
            <person name="Simionati B."/>
            <person name="Conrad A."/>
            <person name="Hornischer K."/>
            <person name="Kauer G."/>
            <person name="Loehnert T.-H."/>
            <person name="Nordsiek G."/>
            <person name="Reichelt J."/>
            <person name="Scharfe M."/>
            <person name="Schoen O."/>
            <person name="Bargues M."/>
            <person name="Terol J."/>
            <person name="Climent J."/>
            <person name="Navarro P."/>
            <person name="Collado C."/>
            <person name="Perez-Perez A."/>
            <person name="Ottenwaelder B."/>
            <person name="Duchemin D."/>
            <person name="Cooke R."/>
            <person name="Laudie M."/>
            <person name="Berger-Llauro C."/>
            <person name="Purnelle B."/>
            <person name="Masuy D."/>
            <person name="de Haan M."/>
            <person name="Maarse A.C."/>
            <person name="Alcaraz J.-P."/>
            <person name="Cottet A."/>
            <person name="Casacuberta E."/>
            <person name="Monfort A."/>
            <person name="Argiriou A."/>
            <person name="Flores M."/>
            <person name="Liguori R."/>
            <person name="Vitale D."/>
            <person name="Mannhaupt G."/>
            <person name="Haase D."/>
            <person name="Schoof H."/>
            <person name="Rudd S."/>
            <person name="Zaccaria P."/>
            <person name="Mewes H.-W."/>
            <person name="Mayer K.F.X."/>
            <person name="Kaul S."/>
            <person name="Town C.D."/>
            <person name="Koo H.L."/>
            <person name="Tallon L.J."/>
            <person name="Jenkins J."/>
            <person name="Rooney T."/>
            <person name="Rizzo M."/>
            <person name="Walts A."/>
            <person name="Utterback T."/>
            <person name="Fujii C.Y."/>
            <person name="Shea T.P."/>
            <person name="Creasy T.H."/>
            <person name="Haas B."/>
            <person name="Maiti R."/>
            <person name="Wu D."/>
            <person name="Peterson J."/>
            <person name="Van Aken S."/>
            <person name="Pai G."/>
            <person name="Militscher J."/>
            <person name="Sellers P."/>
            <person name="Gill J.E."/>
            <person name="Feldblyum T.V."/>
            <person name="Preuss D."/>
            <person name="Lin X."/>
            <person name="Nierman W.C."/>
            <person name="Salzberg S.L."/>
            <person name="White O."/>
            <person name="Venter J.C."/>
            <person name="Fraser C.M."/>
            <person name="Kaneko T."/>
            <person name="Nakamura Y."/>
            <person name="Sato S."/>
            <person name="Kato T."/>
            <person name="Asamizu E."/>
            <person name="Sasamoto S."/>
            <person name="Kimura T."/>
            <person name="Idesawa K."/>
            <person name="Kawashima K."/>
            <person name="Kishida Y."/>
            <person name="Kiyokawa C."/>
            <person name="Kohara M."/>
            <person name="Matsumoto M."/>
            <person name="Matsuno A."/>
            <person name="Muraki A."/>
            <person name="Nakayama S."/>
            <person name="Nakazaki N."/>
            <person name="Shinpo S."/>
            <person name="Takeuchi C."/>
            <person name="Wada T."/>
            <person name="Watanabe A."/>
            <person name="Yamada M."/>
            <person name="Yasuda M."/>
            <person name="Tabata S."/>
        </authorList>
    </citation>
    <scope>NUCLEOTIDE SEQUENCE [LARGE SCALE GENOMIC DNA]</scope>
    <source>
        <strain>cv. Columbia</strain>
    </source>
</reference>
<reference key="2">
    <citation type="journal article" date="2017" name="Plant J.">
        <title>Araport11: a complete reannotation of the Arabidopsis thaliana reference genome.</title>
        <authorList>
            <person name="Cheng C.Y."/>
            <person name="Krishnakumar V."/>
            <person name="Chan A.P."/>
            <person name="Thibaud-Nissen F."/>
            <person name="Schobel S."/>
            <person name="Town C.D."/>
        </authorList>
    </citation>
    <scope>GENOME REANNOTATION</scope>
    <source>
        <strain>cv. Columbia</strain>
    </source>
</reference>
<gene>
    <name type="primary">BASS4</name>
    <name type="ordered locus">At3g56160</name>
    <name type="ORF">F18O21.120</name>
</gene>
<organism>
    <name type="scientific">Arabidopsis thaliana</name>
    <name type="common">Mouse-ear cress</name>
    <dbReference type="NCBI Taxonomy" id="3702"/>
    <lineage>
        <taxon>Eukaryota</taxon>
        <taxon>Viridiplantae</taxon>
        <taxon>Streptophyta</taxon>
        <taxon>Embryophyta</taxon>
        <taxon>Tracheophyta</taxon>
        <taxon>Spermatophyta</taxon>
        <taxon>Magnoliopsida</taxon>
        <taxon>eudicotyledons</taxon>
        <taxon>Gunneridae</taxon>
        <taxon>Pentapetalae</taxon>
        <taxon>rosids</taxon>
        <taxon>malvids</taxon>
        <taxon>Brassicales</taxon>
        <taxon>Brassicaceae</taxon>
        <taxon>Camelineae</taxon>
        <taxon>Arabidopsis</taxon>
    </lineage>
</organism>
<keyword id="KW-0150">Chloroplast</keyword>
<keyword id="KW-0472">Membrane</keyword>
<keyword id="KW-0934">Plastid</keyword>
<keyword id="KW-1185">Reference proteome</keyword>
<keyword id="KW-0809">Transit peptide</keyword>
<keyword id="KW-0812">Transmembrane</keyword>
<keyword id="KW-1133">Transmembrane helix</keyword>
<keyword id="KW-0813">Transport</keyword>
<sequence length="436" mass="46530">MAIASTLASTQNPFLCLRQPPSPGNRSVVFRRCQDPCGRRWISRSIRACQPSDKVSGQFPFDFMYSSMLIPSSCGEWNRIHLGGDGGISASAQRLYFGKELLSFASDNFLPLALVSGVGLGFANPTLGCLADKYSFTKISTCGIFIISGLTLRTEAIGAAVKGWPLGLFGLISILLLTPSFSRLIMLVQLQPRELVTGLGIFCCMPTTLSSGVALTHLAGGNAALALAVTVASNLLGILTIPFWVSRYIAGGVGVSFPTDQLFRSLIVTLLIPLIIGKVIRESFKGFANFVDNNRKLFSKINAICLSLVPWIQVSRSRSLLLSVQPKVFLAAVGIGILLHLSLLAFNAVSIRILSGLTGGSKSSKENSTAVLLVSSQKTLPVMVAVVEQLGGAFGETGLLVLPCVAAHLNQIMIDSVLVNLWLRRGKDTSTKVKTA</sequence>
<proteinExistence type="inferred from homology"/>
<accession>F4IZC4</accession>
<accession>Q9LYM5</accession>
<protein>
    <recommendedName>
        <fullName>Probable sodium/metabolite cotransporter BASS4, chloroplastic</fullName>
    </recommendedName>
    <alternativeName>
        <fullName>Bile acid transporter 4</fullName>
    </alternativeName>
    <alternativeName>
        <fullName>Bile acid-sodium symporter family protein 4</fullName>
    </alternativeName>
</protein>
<name>BASS4_ARATH</name>
<dbReference type="EMBL" id="AL163763">
    <property type="protein sequence ID" value="CAB87415.1"/>
    <property type="status" value="ALT_SEQ"/>
    <property type="molecule type" value="Genomic_DNA"/>
</dbReference>
<dbReference type="EMBL" id="CP002686">
    <property type="protein sequence ID" value="AEE79488.1"/>
    <property type="molecule type" value="Genomic_DNA"/>
</dbReference>
<dbReference type="PIR" id="T47733">
    <property type="entry name" value="T47733"/>
</dbReference>
<dbReference type="RefSeq" id="NP_191175.2">
    <property type="nucleotide sequence ID" value="NM_115474.3"/>
</dbReference>
<dbReference type="SMR" id="F4IZC4"/>
<dbReference type="BioGRID" id="10098">
    <property type="interactions" value="1"/>
</dbReference>
<dbReference type="FunCoup" id="F4IZC4">
    <property type="interactions" value="2903"/>
</dbReference>
<dbReference type="STRING" id="3702.F4IZC4"/>
<dbReference type="TCDB" id="2.A.28.3.2">
    <property type="family name" value="the bile acid:na(+) symporter (bass) family"/>
</dbReference>
<dbReference type="PaxDb" id="3702-AT3G56160.1"/>
<dbReference type="EnsemblPlants" id="AT3G56160.1">
    <property type="protein sequence ID" value="AT3G56160.1"/>
    <property type="gene ID" value="AT3G56160"/>
</dbReference>
<dbReference type="GeneID" id="824782"/>
<dbReference type="Gramene" id="AT3G56160.1">
    <property type="protein sequence ID" value="AT3G56160.1"/>
    <property type="gene ID" value="AT3G56160"/>
</dbReference>
<dbReference type="KEGG" id="ath:AT3G56160"/>
<dbReference type="Araport" id="AT3G56160"/>
<dbReference type="TAIR" id="AT3G56160"/>
<dbReference type="eggNOG" id="KOG4821">
    <property type="taxonomic scope" value="Eukaryota"/>
</dbReference>
<dbReference type="HOGENOM" id="CLU_033952_1_0_1"/>
<dbReference type="InParanoid" id="F4IZC4"/>
<dbReference type="PRO" id="PR:F4IZC4"/>
<dbReference type="Proteomes" id="UP000006548">
    <property type="component" value="Chromosome 3"/>
</dbReference>
<dbReference type="ExpressionAtlas" id="F4IZC4">
    <property type="expression patterns" value="baseline and differential"/>
</dbReference>
<dbReference type="GO" id="GO:0009507">
    <property type="term" value="C:chloroplast"/>
    <property type="evidence" value="ECO:0007005"/>
    <property type="project" value="TAIR"/>
</dbReference>
<dbReference type="GO" id="GO:0009941">
    <property type="term" value="C:chloroplast envelope"/>
    <property type="evidence" value="ECO:0007005"/>
    <property type="project" value="TAIR"/>
</dbReference>
<dbReference type="GO" id="GO:0016020">
    <property type="term" value="C:membrane"/>
    <property type="evidence" value="ECO:0007669"/>
    <property type="project" value="UniProtKB-SubCell"/>
</dbReference>
<dbReference type="FunFam" id="1.20.1530.20:FF:000021">
    <property type="entry name" value="Probable sodium/metabolite cotransporter BASS4, chloroplastic"/>
    <property type="match status" value="1"/>
</dbReference>
<dbReference type="Gene3D" id="1.20.1530.20">
    <property type="match status" value="1"/>
</dbReference>
<dbReference type="InterPro" id="IPR038770">
    <property type="entry name" value="Na+/solute_symporter_sf"/>
</dbReference>
<dbReference type="InterPro" id="IPR016833">
    <property type="entry name" value="Put_Na-Bile_cotransptr"/>
</dbReference>
<dbReference type="PANTHER" id="PTHR18640:SF10">
    <property type="entry name" value="SODIUM_METABOLITE COTRANSPORTER BASS4, CHLOROPLASTIC-RELATED"/>
    <property type="match status" value="1"/>
</dbReference>
<dbReference type="PANTHER" id="PTHR18640">
    <property type="entry name" value="SOLUTE CARRIER FAMILY 10 MEMBER 7"/>
    <property type="match status" value="1"/>
</dbReference>
<dbReference type="Pfam" id="PF13593">
    <property type="entry name" value="SBF_like"/>
    <property type="match status" value="1"/>
</dbReference>